<name>DNAK_POLSJ</name>
<evidence type="ECO:0000255" key="1">
    <source>
        <dbReference type="HAMAP-Rule" id="MF_00332"/>
    </source>
</evidence>
<evidence type="ECO:0000256" key="2">
    <source>
        <dbReference type="SAM" id="MobiDB-lite"/>
    </source>
</evidence>
<proteinExistence type="inferred from homology"/>
<organism>
    <name type="scientific">Polaromonas sp. (strain JS666 / ATCC BAA-500)</name>
    <dbReference type="NCBI Taxonomy" id="296591"/>
    <lineage>
        <taxon>Bacteria</taxon>
        <taxon>Pseudomonadati</taxon>
        <taxon>Pseudomonadota</taxon>
        <taxon>Betaproteobacteria</taxon>
        <taxon>Burkholderiales</taxon>
        <taxon>Comamonadaceae</taxon>
        <taxon>Polaromonas</taxon>
    </lineage>
</organism>
<feature type="chain" id="PRO_1000059628" description="Chaperone protein DnaK">
    <location>
        <begin position="1"/>
        <end position="647"/>
    </location>
</feature>
<feature type="region of interest" description="Disordered" evidence="2">
    <location>
        <begin position="607"/>
        <end position="647"/>
    </location>
</feature>
<feature type="compositionally biased region" description="Basic and acidic residues" evidence="2">
    <location>
        <begin position="627"/>
        <end position="647"/>
    </location>
</feature>
<feature type="modified residue" description="Phosphothreonine; by autocatalysis" evidence="1">
    <location>
        <position position="200"/>
    </location>
</feature>
<dbReference type="EMBL" id="CP000316">
    <property type="protein sequence ID" value="ABE45040.1"/>
    <property type="molecule type" value="Genomic_DNA"/>
</dbReference>
<dbReference type="RefSeq" id="WP_011484035.1">
    <property type="nucleotide sequence ID" value="NC_007948.1"/>
</dbReference>
<dbReference type="SMR" id="Q128K2"/>
<dbReference type="STRING" id="296591.Bpro_3126"/>
<dbReference type="KEGG" id="pol:Bpro_3126"/>
<dbReference type="eggNOG" id="COG0443">
    <property type="taxonomic scope" value="Bacteria"/>
</dbReference>
<dbReference type="HOGENOM" id="CLU_005965_2_1_4"/>
<dbReference type="OrthoDB" id="9766019at2"/>
<dbReference type="Proteomes" id="UP000001983">
    <property type="component" value="Chromosome"/>
</dbReference>
<dbReference type="GO" id="GO:0005524">
    <property type="term" value="F:ATP binding"/>
    <property type="evidence" value="ECO:0007669"/>
    <property type="project" value="UniProtKB-UniRule"/>
</dbReference>
<dbReference type="GO" id="GO:0140662">
    <property type="term" value="F:ATP-dependent protein folding chaperone"/>
    <property type="evidence" value="ECO:0007669"/>
    <property type="project" value="InterPro"/>
</dbReference>
<dbReference type="GO" id="GO:0051082">
    <property type="term" value="F:unfolded protein binding"/>
    <property type="evidence" value="ECO:0007669"/>
    <property type="project" value="InterPro"/>
</dbReference>
<dbReference type="CDD" id="cd10234">
    <property type="entry name" value="ASKHA_NBD_HSP70_DnaK-like"/>
    <property type="match status" value="1"/>
</dbReference>
<dbReference type="FunFam" id="2.60.34.10:FF:000014">
    <property type="entry name" value="Chaperone protein DnaK HSP70"/>
    <property type="match status" value="1"/>
</dbReference>
<dbReference type="FunFam" id="1.20.1270.10:FF:000001">
    <property type="entry name" value="Molecular chaperone DnaK"/>
    <property type="match status" value="1"/>
</dbReference>
<dbReference type="FunFam" id="3.30.420.40:FF:000004">
    <property type="entry name" value="Molecular chaperone DnaK"/>
    <property type="match status" value="1"/>
</dbReference>
<dbReference type="FunFam" id="3.90.640.10:FF:000003">
    <property type="entry name" value="Molecular chaperone DnaK"/>
    <property type="match status" value="1"/>
</dbReference>
<dbReference type="Gene3D" id="1.20.1270.10">
    <property type="match status" value="1"/>
</dbReference>
<dbReference type="Gene3D" id="3.30.420.40">
    <property type="match status" value="2"/>
</dbReference>
<dbReference type="Gene3D" id="3.90.640.10">
    <property type="entry name" value="Actin, Chain A, domain 4"/>
    <property type="match status" value="1"/>
</dbReference>
<dbReference type="Gene3D" id="2.60.34.10">
    <property type="entry name" value="Substrate Binding Domain Of DNAk, Chain A, domain 1"/>
    <property type="match status" value="1"/>
</dbReference>
<dbReference type="HAMAP" id="MF_00332">
    <property type="entry name" value="DnaK"/>
    <property type="match status" value="1"/>
</dbReference>
<dbReference type="InterPro" id="IPR043129">
    <property type="entry name" value="ATPase_NBD"/>
</dbReference>
<dbReference type="InterPro" id="IPR012725">
    <property type="entry name" value="Chaperone_DnaK"/>
</dbReference>
<dbReference type="InterPro" id="IPR018181">
    <property type="entry name" value="Heat_shock_70_CS"/>
</dbReference>
<dbReference type="InterPro" id="IPR029048">
    <property type="entry name" value="HSP70_C_sf"/>
</dbReference>
<dbReference type="InterPro" id="IPR029047">
    <property type="entry name" value="HSP70_peptide-bd_sf"/>
</dbReference>
<dbReference type="InterPro" id="IPR013126">
    <property type="entry name" value="Hsp_70_fam"/>
</dbReference>
<dbReference type="NCBIfam" id="NF001413">
    <property type="entry name" value="PRK00290.1"/>
    <property type="match status" value="1"/>
</dbReference>
<dbReference type="NCBIfam" id="NF003520">
    <property type="entry name" value="PRK05183.1"/>
    <property type="match status" value="1"/>
</dbReference>
<dbReference type="NCBIfam" id="TIGR02350">
    <property type="entry name" value="prok_dnaK"/>
    <property type="match status" value="1"/>
</dbReference>
<dbReference type="PANTHER" id="PTHR19375">
    <property type="entry name" value="HEAT SHOCK PROTEIN 70KDA"/>
    <property type="match status" value="1"/>
</dbReference>
<dbReference type="Pfam" id="PF00012">
    <property type="entry name" value="HSP70"/>
    <property type="match status" value="1"/>
</dbReference>
<dbReference type="PRINTS" id="PR00301">
    <property type="entry name" value="HEATSHOCK70"/>
</dbReference>
<dbReference type="SUPFAM" id="SSF53067">
    <property type="entry name" value="Actin-like ATPase domain"/>
    <property type="match status" value="2"/>
</dbReference>
<dbReference type="SUPFAM" id="SSF100934">
    <property type="entry name" value="Heat shock protein 70kD (HSP70), C-terminal subdomain"/>
    <property type="match status" value="1"/>
</dbReference>
<dbReference type="SUPFAM" id="SSF100920">
    <property type="entry name" value="Heat shock protein 70kD (HSP70), peptide-binding domain"/>
    <property type="match status" value="1"/>
</dbReference>
<dbReference type="PROSITE" id="PS00297">
    <property type="entry name" value="HSP70_1"/>
    <property type="match status" value="1"/>
</dbReference>
<dbReference type="PROSITE" id="PS00329">
    <property type="entry name" value="HSP70_2"/>
    <property type="match status" value="1"/>
</dbReference>
<dbReference type="PROSITE" id="PS01036">
    <property type="entry name" value="HSP70_3"/>
    <property type="match status" value="1"/>
</dbReference>
<gene>
    <name evidence="1" type="primary">dnaK</name>
    <name type="ordered locus">Bpro_3126</name>
</gene>
<protein>
    <recommendedName>
        <fullName evidence="1">Chaperone protein DnaK</fullName>
    </recommendedName>
    <alternativeName>
        <fullName evidence="1">HSP70</fullName>
    </alternativeName>
    <alternativeName>
        <fullName evidence="1">Heat shock 70 kDa protein</fullName>
    </alternativeName>
    <alternativeName>
        <fullName evidence="1">Heat shock protein 70</fullName>
    </alternativeName>
</protein>
<sequence length="647" mass="69535">MGRIIGIDLGTTNSCVSIMEGNTPRVIENSEGARTTPSIVAYQEDGEVLVGASAKRQAVTNAKNTLYAIKRLIGRKFTEKEVQKDINLMPYKIAAADNGDAWVEVRGKQISAQQVSADILRKMKKTAEDYLGEPVTEAVITVPAYFNDAQRQATKDAGRIAGLEVKRIINEPTAAALAFGLDKQEKGDRKIAVYDLGGGTFDISIIEIADVDGEKQFEVLSTNGDTFLGGEDFDQRIIDYIIAEFKKEQGVDLSKDVLALQRLKEAAEKAKIELSNSAQTDINLPYITADASGPKHLNIKLSRAKLEALVEELLERTLAPCRTAIKDAGVSVGDIHDVILVGGQTRMPKVQEMVKALFGKEPRKDVNPDEAVAVGAAIQGQVLSGDRTDVLLLDVTPLSLGIETMGGVMTKMIKKNTTIPTKFAQTFSTAEDNQPAVTIKVFQGEREIASGNKALGEFNLEGIPPAARGTPQIEVSFDIDANGILHVGAKDKGTGKENKITIKANSGLSEAEIQQMVKDAELHSADDKKKVEFVQAKNNAEAMVHSVRKSLGEYGDKLEVGEKEKIETAIKDMEEALKGDDKDAIEAKNTALMEASQKLGEKMYADMQSSQAAGAEAAAGGAGAEQAHAKPADDNVVDAEVKEVKKG</sequence>
<keyword id="KW-0067">ATP-binding</keyword>
<keyword id="KW-0143">Chaperone</keyword>
<keyword id="KW-0547">Nucleotide-binding</keyword>
<keyword id="KW-0597">Phosphoprotein</keyword>
<keyword id="KW-1185">Reference proteome</keyword>
<keyword id="KW-0346">Stress response</keyword>
<reference key="1">
    <citation type="journal article" date="2008" name="Appl. Environ. Microbiol.">
        <title>The genome of Polaromonas sp. strain JS666: insights into the evolution of a hydrocarbon- and xenobiotic-degrading bacterium, and features of relevance to biotechnology.</title>
        <authorList>
            <person name="Mattes T.E."/>
            <person name="Alexander A.K."/>
            <person name="Richardson P.M."/>
            <person name="Munk A.C."/>
            <person name="Han C.S."/>
            <person name="Stothard P."/>
            <person name="Coleman N.V."/>
        </authorList>
    </citation>
    <scope>NUCLEOTIDE SEQUENCE [LARGE SCALE GENOMIC DNA]</scope>
    <source>
        <strain>JS666 / ATCC BAA-500</strain>
    </source>
</reference>
<accession>Q128K2</accession>
<comment type="function">
    <text evidence="1">Acts as a chaperone.</text>
</comment>
<comment type="induction">
    <text evidence="1">By stress conditions e.g. heat shock.</text>
</comment>
<comment type="similarity">
    <text evidence="1">Belongs to the heat shock protein 70 family.</text>
</comment>